<name>CH603_RHIJ3</name>
<protein>
    <recommendedName>
        <fullName evidence="1">Chaperonin GroEL 3</fullName>
        <ecNumber evidence="1">5.6.1.7</ecNumber>
    </recommendedName>
    <alternativeName>
        <fullName evidence="1">60 kDa chaperonin 3</fullName>
    </alternativeName>
    <alternativeName>
        <fullName evidence="1">Chaperonin-60 3</fullName>
        <shortName evidence="1">Cpn60 3</shortName>
    </alternativeName>
</protein>
<geneLocation type="plasmid">
    <name>pRL12</name>
</geneLocation>
<organism>
    <name type="scientific">Rhizobium johnstonii (strain DSM 114642 / LMG 32736 / 3841)</name>
    <name type="common">Rhizobium leguminosarum bv. viciae</name>
    <dbReference type="NCBI Taxonomy" id="216596"/>
    <lineage>
        <taxon>Bacteria</taxon>
        <taxon>Pseudomonadati</taxon>
        <taxon>Pseudomonadota</taxon>
        <taxon>Alphaproteobacteria</taxon>
        <taxon>Hyphomicrobiales</taxon>
        <taxon>Rhizobiaceae</taxon>
        <taxon>Rhizobium/Agrobacterium group</taxon>
        <taxon>Rhizobium</taxon>
        <taxon>Rhizobium johnstonii</taxon>
    </lineage>
</organism>
<accession>Q1M3H2</accession>
<keyword id="KW-0067">ATP-binding</keyword>
<keyword id="KW-0143">Chaperone</keyword>
<keyword id="KW-0963">Cytoplasm</keyword>
<keyword id="KW-0413">Isomerase</keyword>
<keyword id="KW-0547">Nucleotide-binding</keyword>
<keyword id="KW-0614">Plasmid</keyword>
<feature type="chain" id="PRO_0000256962" description="Chaperonin GroEL 3">
    <location>
        <begin position="1"/>
        <end position="542"/>
    </location>
</feature>
<feature type="binding site" evidence="1">
    <location>
        <begin position="30"/>
        <end position="33"/>
    </location>
    <ligand>
        <name>ATP</name>
        <dbReference type="ChEBI" id="CHEBI:30616"/>
    </ligand>
</feature>
<feature type="binding site" evidence="1">
    <location>
        <position position="51"/>
    </location>
    <ligand>
        <name>ATP</name>
        <dbReference type="ChEBI" id="CHEBI:30616"/>
    </ligand>
</feature>
<feature type="binding site" evidence="1">
    <location>
        <begin position="87"/>
        <end position="91"/>
    </location>
    <ligand>
        <name>ATP</name>
        <dbReference type="ChEBI" id="CHEBI:30616"/>
    </ligand>
</feature>
<feature type="binding site" evidence="1">
    <location>
        <position position="415"/>
    </location>
    <ligand>
        <name>ATP</name>
        <dbReference type="ChEBI" id="CHEBI:30616"/>
    </ligand>
</feature>
<feature type="binding site" evidence="1">
    <location>
        <position position="496"/>
    </location>
    <ligand>
        <name>ATP</name>
        <dbReference type="ChEBI" id="CHEBI:30616"/>
    </ligand>
</feature>
<comment type="function">
    <text evidence="1">Together with its co-chaperonin GroES, plays an essential role in assisting protein folding. The GroEL-GroES system forms a nano-cage that allows encapsulation of the non-native substrate proteins and provides a physical environment optimized to promote and accelerate protein folding.</text>
</comment>
<comment type="catalytic activity">
    <reaction evidence="1">
        <text>ATP + H2O + a folded polypeptide = ADP + phosphate + an unfolded polypeptide.</text>
        <dbReference type="EC" id="5.6.1.7"/>
    </reaction>
</comment>
<comment type="subunit">
    <text evidence="1">Forms a cylinder of 14 subunits composed of two heptameric rings stacked back-to-back. Interacts with the co-chaperonin GroES.</text>
</comment>
<comment type="subcellular location">
    <subcellularLocation>
        <location evidence="1">Cytoplasm</location>
    </subcellularLocation>
</comment>
<comment type="similarity">
    <text evidence="1">Belongs to the chaperonin (HSP60) family.</text>
</comment>
<proteinExistence type="inferred from homology"/>
<dbReference type="EC" id="5.6.1.7" evidence="1"/>
<dbReference type="EMBL" id="AM236086">
    <property type="protein sequence ID" value="CAK12352.1"/>
    <property type="molecule type" value="Genomic_DNA"/>
</dbReference>
<dbReference type="SMR" id="Q1M3H2"/>
<dbReference type="EnsemblBacteria" id="CAK12352">
    <property type="protein sequence ID" value="CAK12352"/>
    <property type="gene ID" value="pRL120642"/>
</dbReference>
<dbReference type="KEGG" id="rle:pRL120642"/>
<dbReference type="eggNOG" id="COG0459">
    <property type="taxonomic scope" value="Bacteria"/>
</dbReference>
<dbReference type="HOGENOM" id="CLU_016503_3_0_5"/>
<dbReference type="Proteomes" id="UP000006575">
    <property type="component" value="Plasmid pRL12"/>
</dbReference>
<dbReference type="GO" id="GO:0005737">
    <property type="term" value="C:cytoplasm"/>
    <property type="evidence" value="ECO:0007669"/>
    <property type="project" value="UniProtKB-SubCell"/>
</dbReference>
<dbReference type="GO" id="GO:0005524">
    <property type="term" value="F:ATP binding"/>
    <property type="evidence" value="ECO:0007669"/>
    <property type="project" value="UniProtKB-UniRule"/>
</dbReference>
<dbReference type="GO" id="GO:0140662">
    <property type="term" value="F:ATP-dependent protein folding chaperone"/>
    <property type="evidence" value="ECO:0007669"/>
    <property type="project" value="InterPro"/>
</dbReference>
<dbReference type="GO" id="GO:0016853">
    <property type="term" value="F:isomerase activity"/>
    <property type="evidence" value="ECO:0007669"/>
    <property type="project" value="UniProtKB-KW"/>
</dbReference>
<dbReference type="GO" id="GO:0051082">
    <property type="term" value="F:unfolded protein binding"/>
    <property type="evidence" value="ECO:0007669"/>
    <property type="project" value="UniProtKB-UniRule"/>
</dbReference>
<dbReference type="GO" id="GO:0042026">
    <property type="term" value="P:protein refolding"/>
    <property type="evidence" value="ECO:0007669"/>
    <property type="project" value="UniProtKB-UniRule"/>
</dbReference>
<dbReference type="CDD" id="cd03344">
    <property type="entry name" value="GroEL"/>
    <property type="match status" value="1"/>
</dbReference>
<dbReference type="FunFam" id="1.10.560.10:FF:000001">
    <property type="entry name" value="60 kDa chaperonin"/>
    <property type="match status" value="1"/>
</dbReference>
<dbReference type="FunFam" id="3.50.7.10:FF:000001">
    <property type="entry name" value="60 kDa chaperonin"/>
    <property type="match status" value="1"/>
</dbReference>
<dbReference type="Gene3D" id="3.50.7.10">
    <property type="entry name" value="GroEL"/>
    <property type="match status" value="1"/>
</dbReference>
<dbReference type="Gene3D" id="1.10.560.10">
    <property type="entry name" value="GroEL-like equatorial domain"/>
    <property type="match status" value="1"/>
</dbReference>
<dbReference type="Gene3D" id="3.30.260.10">
    <property type="entry name" value="TCP-1-like chaperonin intermediate domain"/>
    <property type="match status" value="1"/>
</dbReference>
<dbReference type="HAMAP" id="MF_00600">
    <property type="entry name" value="CH60"/>
    <property type="match status" value="1"/>
</dbReference>
<dbReference type="InterPro" id="IPR018370">
    <property type="entry name" value="Chaperonin_Cpn60_CS"/>
</dbReference>
<dbReference type="InterPro" id="IPR001844">
    <property type="entry name" value="Cpn60/GroEL"/>
</dbReference>
<dbReference type="InterPro" id="IPR002423">
    <property type="entry name" value="Cpn60/GroEL/TCP-1"/>
</dbReference>
<dbReference type="InterPro" id="IPR027409">
    <property type="entry name" value="GroEL-like_apical_dom_sf"/>
</dbReference>
<dbReference type="InterPro" id="IPR027413">
    <property type="entry name" value="GROEL-like_equatorial_sf"/>
</dbReference>
<dbReference type="InterPro" id="IPR027410">
    <property type="entry name" value="TCP-1-like_intermed_sf"/>
</dbReference>
<dbReference type="NCBIfam" id="TIGR02348">
    <property type="entry name" value="GroEL"/>
    <property type="match status" value="1"/>
</dbReference>
<dbReference type="NCBIfam" id="NF000592">
    <property type="entry name" value="PRK00013.1"/>
    <property type="match status" value="1"/>
</dbReference>
<dbReference type="NCBIfam" id="NF009487">
    <property type="entry name" value="PRK12849.1"/>
    <property type="match status" value="1"/>
</dbReference>
<dbReference type="NCBIfam" id="NF009488">
    <property type="entry name" value="PRK12850.1"/>
    <property type="match status" value="1"/>
</dbReference>
<dbReference type="NCBIfam" id="NF009489">
    <property type="entry name" value="PRK12851.1"/>
    <property type="match status" value="1"/>
</dbReference>
<dbReference type="PANTHER" id="PTHR45633">
    <property type="entry name" value="60 KDA HEAT SHOCK PROTEIN, MITOCHONDRIAL"/>
    <property type="match status" value="1"/>
</dbReference>
<dbReference type="Pfam" id="PF00118">
    <property type="entry name" value="Cpn60_TCP1"/>
    <property type="match status" value="1"/>
</dbReference>
<dbReference type="PRINTS" id="PR00298">
    <property type="entry name" value="CHAPERONIN60"/>
</dbReference>
<dbReference type="SUPFAM" id="SSF52029">
    <property type="entry name" value="GroEL apical domain-like"/>
    <property type="match status" value="1"/>
</dbReference>
<dbReference type="SUPFAM" id="SSF48592">
    <property type="entry name" value="GroEL equatorial domain-like"/>
    <property type="match status" value="1"/>
</dbReference>
<dbReference type="SUPFAM" id="SSF54849">
    <property type="entry name" value="GroEL-intermediate domain like"/>
    <property type="match status" value="1"/>
</dbReference>
<dbReference type="PROSITE" id="PS00296">
    <property type="entry name" value="CHAPERONINS_CPN60"/>
    <property type="match status" value="1"/>
</dbReference>
<sequence length="542" mass="57684">MAAKEIKFSTEAREKMLRGVDILANAVKATLGPKGRNVVIERSFGAPRITKDGVSVAKEIELEDKFENMGAQMVREVASKTSDVAGDGTTTATVLAQAIVKEGAKAVTSGMNPMDLKRGIDLAVGAIVAELKANARKISNNSEIAQVGTISANGDAEIGRFLAEAMERVGNDGVITVEEAKTAETELEVVEGMQFDRGYLSPYFVTNADKMRVEFEDPYILIHEKKLSNLQSMLPVLEAVVQSSKPLLIIAEDVEGEALATLVVNKLRGGLKIAAVKAPGFGDRRKAMLEDIAILTAGTVISEDLGIKLESVTLDMLGRAKKVSIEKENTTIVDGSGAKSDIEGRVAQIRAQIEETTSDYDREKLQERLAKLAGGVAVIRVGGSTEVEVKEKKDRVDDALHATRAAVEEGILPGGGVALLRAVKALDNVETANGDQRVGVDIVRRAVEAPARQIAENAGAEGSVIVGKLREKSEFSYGWNAQTGEYGDLYAQGVIDPAKVVRTALQDAASIAGLLVTTEAMIAEKPRKDAPPPMPAGHGMDF</sequence>
<evidence type="ECO:0000255" key="1">
    <source>
        <dbReference type="HAMAP-Rule" id="MF_00600"/>
    </source>
</evidence>
<reference key="1">
    <citation type="journal article" date="2006" name="Genome Biol.">
        <title>The genome of Rhizobium leguminosarum has recognizable core and accessory components.</title>
        <authorList>
            <person name="Young J.P.W."/>
            <person name="Crossman L.C."/>
            <person name="Johnston A.W.B."/>
            <person name="Thomson N.R."/>
            <person name="Ghazoui Z.F."/>
            <person name="Hull K.H."/>
            <person name="Wexler M."/>
            <person name="Curson A.R.J."/>
            <person name="Todd J.D."/>
            <person name="Poole P.S."/>
            <person name="Mauchline T.H."/>
            <person name="East A.K."/>
            <person name="Quail M.A."/>
            <person name="Churcher C."/>
            <person name="Arrowsmith C."/>
            <person name="Cherevach I."/>
            <person name="Chillingworth T."/>
            <person name="Clarke K."/>
            <person name="Cronin A."/>
            <person name="Davis P."/>
            <person name="Fraser A."/>
            <person name="Hance Z."/>
            <person name="Hauser H."/>
            <person name="Jagels K."/>
            <person name="Moule S."/>
            <person name="Mungall K."/>
            <person name="Norbertczak H."/>
            <person name="Rabbinowitsch E."/>
            <person name="Sanders M."/>
            <person name="Simmonds M."/>
            <person name="Whitehead S."/>
            <person name="Parkhill J."/>
        </authorList>
    </citation>
    <scope>NUCLEOTIDE SEQUENCE [LARGE SCALE GENOMIC DNA]</scope>
    <source>
        <strain>DSM 114642 / LMG 32736 / 3841</strain>
    </source>
</reference>
<gene>
    <name evidence="1" type="primary">groEL3</name>
    <name evidence="1" type="synonym">groL3</name>
    <name type="ordered locus">pRL120642</name>
</gene>